<gene>
    <name evidence="1" type="primary">dnaK</name>
    <name type="ordered locus">xcc-b100_2799</name>
</gene>
<protein>
    <recommendedName>
        <fullName evidence="1">Chaperone protein DnaK</fullName>
    </recommendedName>
    <alternativeName>
        <fullName evidence="1">HSP70</fullName>
    </alternativeName>
    <alternativeName>
        <fullName evidence="1">Heat shock 70 kDa protein</fullName>
    </alternativeName>
    <alternativeName>
        <fullName evidence="1">Heat shock protein 70</fullName>
    </alternativeName>
</protein>
<accession>B0RVU2</accession>
<organism>
    <name type="scientific">Xanthomonas campestris pv. campestris (strain B100)</name>
    <dbReference type="NCBI Taxonomy" id="509169"/>
    <lineage>
        <taxon>Bacteria</taxon>
        <taxon>Pseudomonadati</taxon>
        <taxon>Pseudomonadota</taxon>
        <taxon>Gammaproteobacteria</taxon>
        <taxon>Lysobacterales</taxon>
        <taxon>Lysobacteraceae</taxon>
        <taxon>Xanthomonas</taxon>
    </lineage>
</organism>
<dbReference type="EMBL" id="AM920689">
    <property type="protein sequence ID" value="CAP52160.1"/>
    <property type="molecule type" value="Genomic_DNA"/>
</dbReference>
<dbReference type="SMR" id="B0RVU2"/>
<dbReference type="KEGG" id="xca:xcc-b100_2799"/>
<dbReference type="HOGENOM" id="CLU_005965_2_1_6"/>
<dbReference type="Proteomes" id="UP000001188">
    <property type="component" value="Chromosome"/>
</dbReference>
<dbReference type="GO" id="GO:0005524">
    <property type="term" value="F:ATP binding"/>
    <property type="evidence" value="ECO:0007669"/>
    <property type="project" value="UniProtKB-UniRule"/>
</dbReference>
<dbReference type="GO" id="GO:0140662">
    <property type="term" value="F:ATP-dependent protein folding chaperone"/>
    <property type="evidence" value="ECO:0007669"/>
    <property type="project" value="InterPro"/>
</dbReference>
<dbReference type="GO" id="GO:0051082">
    <property type="term" value="F:unfolded protein binding"/>
    <property type="evidence" value="ECO:0007669"/>
    <property type="project" value="InterPro"/>
</dbReference>
<dbReference type="CDD" id="cd10234">
    <property type="entry name" value="ASKHA_NBD_HSP70_DnaK-like"/>
    <property type="match status" value="1"/>
</dbReference>
<dbReference type="FunFam" id="2.60.34.10:FF:000014">
    <property type="entry name" value="Chaperone protein DnaK HSP70"/>
    <property type="match status" value="1"/>
</dbReference>
<dbReference type="FunFam" id="3.30.30.30:FF:000003">
    <property type="entry name" value="Heat shock protein 9"/>
    <property type="match status" value="1"/>
</dbReference>
<dbReference type="FunFam" id="1.20.1270.10:FF:000001">
    <property type="entry name" value="Molecular chaperone DnaK"/>
    <property type="match status" value="1"/>
</dbReference>
<dbReference type="FunFam" id="3.30.420.40:FF:000004">
    <property type="entry name" value="Molecular chaperone DnaK"/>
    <property type="match status" value="1"/>
</dbReference>
<dbReference type="FunFam" id="3.90.640.10:FF:000003">
    <property type="entry name" value="Molecular chaperone DnaK"/>
    <property type="match status" value="1"/>
</dbReference>
<dbReference type="Gene3D" id="1.20.1270.10">
    <property type="match status" value="1"/>
</dbReference>
<dbReference type="Gene3D" id="3.30.420.40">
    <property type="match status" value="2"/>
</dbReference>
<dbReference type="Gene3D" id="3.90.640.10">
    <property type="entry name" value="Actin, Chain A, domain 4"/>
    <property type="match status" value="1"/>
</dbReference>
<dbReference type="Gene3D" id="2.60.34.10">
    <property type="entry name" value="Substrate Binding Domain Of DNAk, Chain A, domain 1"/>
    <property type="match status" value="1"/>
</dbReference>
<dbReference type="HAMAP" id="MF_00332">
    <property type="entry name" value="DnaK"/>
    <property type="match status" value="1"/>
</dbReference>
<dbReference type="InterPro" id="IPR043129">
    <property type="entry name" value="ATPase_NBD"/>
</dbReference>
<dbReference type="InterPro" id="IPR012725">
    <property type="entry name" value="Chaperone_DnaK"/>
</dbReference>
<dbReference type="InterPro" id="IPR018181">
    <property type="entry name" value="Heat_shock_70_CS"/>
</dbReference>
<dbReference type="InterPro" id="IPR029048">
    <property type="entry name" value="HSP70_C_sf"/>
</dbReference>
<dbReference type="InterPro" id="IPR029047">
    <property type="entry name" value="HSP70_peptide-bd_sf"/>
</dbReference>
<dbReference type="InterPro" id="IPR013126">
    <property type="entry name" value="Hsp_70_fam"/>
</dbReference>
<dbReference type="NCBIfam" id="NF001413">
    <property type="entry name" value="PRK00290.1"/>
    <property type="match status" value="1"/>
</dbReference>
<dbReference type="NCBIfam" id="NF003520">
    <property type="entry name" value="PRK05183.1"/>
    <property type="match status" value="1"/>
</dbReference>
<dbReference type="NCBIfam" id="TIGR02350">
    <property type="entry name" value="prok_dnaK"/>
    <property type="match status" value="1"/>
</dbReference>
<dbReference type="PANTHER" id="PTHR19375">
    <property type="entry name" value="HEAT SHOCK PROTEIN 70KDA"/>
    <property type="match status" value="1"/>
</dbReference>
<dbReference type="Pfam" id="PF00012">
    <property type="entry name" value="HSP70"/>
    <property type="match status" value="1"/>
</dbReference>
<dbReference type="PRINTS" id="PR00301">
    <property type="entry name" value="HEATSHOCK70"/>
</dbReference>
<dbReference type="SUPFAM" id="SSF53067">
    <property type="entry name" value="Actin-like ATPase domain"/>
    <property type="match status" value="2"/>
</dbReference>
<dbReference type="SUPFAM" id="SSF100920">
    <property type="entry name" value="Heat shock protein 70kD (HSP70), peptide-binding domain"/>
    <property type="match status" value="1"/>
</dbReference>
<dbReference type="PROSITE" id="PS00297">
    <property type="entry name" value="HSP70_1"/>
    <property type="match status" value="1"/>
</dbReference>
<dbReference type="PROSITE" id="PS00329">
    <property type="entry name" value="HSP70_2"/>
    <property type="match status" value="1"/>
</dbReference>
<dbReference type="PROSITE" id="PS01036">
    <property type="entry name" value="HSP70_3"/>
    <property type="match status" value="1"/>
</dbReference>
<evidence type="ECO:0000255" key="1">
    <source>
        <dbReference type="HAMAP-Rule" id="MF_00332"/>
    </source>
</evidence>
<evidence type="ECO:0000256" key="2">
    <source>
        <dbReference type="SAM" id="MobiDB-lite"/>
    </source>
</evidence>
<keyword id="KW-0067">ATP-binding</keyword>
<keyword id="KW-0143">Chaperone</keyword>
<keyword id="KW-0547">Nucleotide-binding</keyword>
<keyword id="KW-0597">Phosphoprotein</keyword>
<keyword id="KW-0346">Stress response</keyword>
<reference key="1">
    <citation type="journal article" date="2008" name="J. Biotechnol.">
        <title>The genome of Xanthomonas campestris pv. campestris B100 and its use for the reconstruction of metabolic pathways involved in xanthan biosynthesis.</title>
        <authorList>
            <person name="Vorhoelter F.-J."/>
            <person name="Schneiker S."/>
            <person name="Goesmann A."/>
            <person name="Krause L."/>
            <person name="Bekel T."/>
            <person name="Kaiser O."/>
            <person name="Linke B."/>
            <person name="Patschkowski T."/>
            <person name="Rueckert C."/>
            <person name="Schmid J."/>
            <person name="Sidhu V.K."/>
            <person name="Sieber V."/>
            <person name="Tauch A."/>
            <person name="Watt S.A."/>
            <person name="Weisshaar B."/>
            <person name="Becker A."/>
            <person name="Niehaus K."/>
            <person name="Puehler A."/>
        </authorList>
    </citation>
    <scope>NUCLEOTIDE SEQUENCE [LARGE SCALE GENOMIC DNA]</scope>
    <source>
        <strain>B100</strain>
    </source>
</reference>
<proteinExistence type="inferred from homology"/>
<comment type="function">
    <text evidence="1">Acts as a chaperone.</text>
</comment>
<comment type="induction">
    <text evidence="1">By stress conditions e.g. heat shock.</text>
</comment>
<comment type="similarity">
    <text evidence="1">Belongs to the heat shock protein 70 family.</text>
</comment>
<feature type="chain" id="PRO_1000119776" description="Chaperone protein DnaK">
    <location>
        <begin position="1"/>
        <end position="642"/>
    </location>
</feature>
<feature type="region of interest" description="Disordered" evidence="2">
    <location>
        <begin position="603"/>
        <end position="627"/>
    </location>
</feature>
<feature type="compositionally biased region" description="Low complexity" evidence="2">
    <location>
        <begin position="603"/>
        <end position="623"/>
    </location>
</feature>
<feature type="modified residue" description="Phosphothreonine; by autocatalysis" evidence="1">
    <location>
        <position position="200"/>
    </location>
</feature>
<name>DNAK_XANCB</name>
<sequence length="642" mass="68837">MGKIIGIDLGTTNSCVAIMDGGKARVIENSEGDRTTPSIVAYTKDGEVLVGASAKRQAVTNPKNTFYAVKRLIGRKFTDGEVQKDISHVPYGILAHDNGDAWVQTSDSKRMAPQEISARVLEKMKKTAEDFLGEKVTEAVITVPAYFNDSQRQATKDAGRIAGLDVKRIINEPTAAALAYGLDKNGGDRKIAVYDLGGGTFDVSIIEIAEVDGEKQFEVLATNGDTFLGGEDFDNRVIEYLVDEFNKDQGIDLRKDPLALQRLKDAAERAKIELSTSQQTEVNLPYVTADASGPKHLNIKLTRAKLEALVEDLVKKSIEPCRTALNDAGLRASDINEVILVGGQTRMPKVQQAVADFFGKEPRKDVNPDEAVAVGAAIQGGVLAGDVKDVLLLDVTPLSLGIETMGGVFTKIIEKNTTIPTKASQTFSTAEDNQSAVTVHVLQGEREQARFNKSLAKFDLSGIEPAPRGMPQVEVSFDIDANGILHVSAKDKKTNKEQKVEIKAGSGLSDEEIQRMVADAEANREEDKKFQELVQTRNQADGLIHATRTAITEHGSKVGGDVIGKVEAALADLETAMKGDDKAQIEARSKTLEEAGQSLYAAAAAAEQGGNADAASGNAQASKAADDVVDAEFTEVKDDKKA</sequence>